<accession>Q2FZK0</accession>
<organism>
    <name type="scientific">Staphylococcus aureus (strain NCTC 8325 / PS 47)</name>
    <dbReference type="NCBI Taxonomy" id="93061"/>
    <lineage>
        <taxon>Bacteria</taxon>
        <taxon>Bacillati</taxon>
        <taxon>Bacillota</taxon>
        <taxon>Bacilli</taxon>
        <taxon>Bacillales</taxon>
        <taxon>Staphylococcaceae</taxon>
        <taxon>Staphylococcus</taxon>
    </lineage>
</organism>
<sequence length="662" mass="75243">MNFPWDQLLVKGNWMITMAQIGAPFLVIGLIAVITYFKLWKYLYKEWFTSVDHKKIGIMYLICAVLMFVRGGIDALLIRAQLTVPDNKFLESNHYNEIFSTHGVIMIIFMAMPFIFGLWNIVVPLQIGARDVAFPVLNNVSFWLFFAGMILFNLSFIIGGSPAAGWTNYAPLAGEFSPGPGVNYYLIAIQISGLGTLATGINFFVTILRCKTPTMKFMQMPMFTVTTFITTLIVILAFPPLTVALALMTTDRIFDTAFFTVAHGGMPMLWANFFWVWGHPEVYIVILPAFGIYSEIIPTFARKRLFGHQSMVWATAGIAFLSFLVWVHHFFTMGNGALINSFFSISTMLIGIPTGVKLFNWLLTLYKGRITFESPMLFSLAFIPNFLLGGVTGVMLAMASADYQYHNTYFLVAHFHYTLVTGVVFACLAGLIFWYPKMMGYKLNETLNKWCFWFFMIGFNVCFLPQFILGLDGMPRRLYTYMPSDGWFLLNLISTIGALLMAIGFLFLVVSIVYSHFKSPREATGDNWDGLGRTLEWTTASAIPPKYNFAITPDWNDYDTFVDMKEHGRHYLDNHNYKDIHMPNNTPVGFWIGIFMTIGGFFLIFETVIPALICLFGIFGTMIYRSFQIDHGYHIPAAEVAETEARLREARIKEREAVSHES</sequence>
<protein>
    <recommendedName>
        <fullName>Probable quinol oxidase subunit 1</fullName>
        <ecNumber>1.10.3.-</ecNumber>
    </recommendedName>
    <alternativeName>
        <fullName>Quinol oxidase polypeptide I</fullName>
    </alternativeName>
</protein>
<evidence type="ECO:0000250" key="1"/>
<evidence type="ECO:0000255" key="2"/>
<evidence type="ECO:0000305" key="3"/>
<comment type="function">
    <text evidence="1">Catalyzes quinol oxidation with the concomitant reduction of oxygen to water.</text>
</comment>
<comment type="catalytic activity">
    <reaction>
        <text>2 a quinol + O2 = 2 a quinone + 2 H2O</text>
        <dbReference type="Rhea" id="RHEA:55376"/>
        <dbReference type="ChEBI" id="CHEBI:15377"/>
        <dbReference type="ChEBI" id="CHEBI:15379"/>
        <dbReference type="ChEBI" id="CHEBI:24646"/>
        <dbReference type="ChEBI" id="CHEBI:132124"/>
    </reaction>
</comment>
<comment type="cofactor">
    <cofactor evidence="1">
        <name>Cu cation</name>
        <dbReference type="ChEBI" id="CHEBI:23378"/>
    </cofactor>
    <text evidence="1">Binds a copper B center.</text>
</comment>
<comment type="cofactor">
    <cofactor evidence="1">
        <name>ferriheme a</name>
        <dbReference type="ChEBI" id="CHEBI:60532"/>
    </cofactor>
</comment>
<comment type="cofactor">
    <text evidence="1">Heme A3.</text>
</comment>
<comment type="pathway">
    <text>Energy metabolism; oxidative phosphorylation.</text>
</comment>
<comment type="subcellular location">
    <subcellularLocation>
        <location evidence="1">Cell membrane</location>
        <topology evidence="1">Multi-pass membrane protein</topology>
    </subcellularLocation>
</comment>
<comment type="similarity">
    <text evidence="3">Belongs to the heme-copper respiratory oxidase family.</text>
</comment>
<gene>
    <name type="primary">qoxB</name>
    <name type="ordered locus">SAOUHSC_01001</name>
</gene>
<feature type="chain" id="PRO_0000276748" description="Probable quinol oxidase subunit 1">
    <location>
        <begin position="1"/>
        <end position="662"/>
    </location>
</feature>
<feature type="transmembrane region" description="Helical" evidence="2">
    <location>
        <begin position="14"/>
        <end position="34"/>
    </location>
</feature>
<feature type="transmembrane region" description="Helical" evidence="2">
    <location>
        <begin position="58"/>
        <end position="78"/>
    </location>
</feature>
<feature type="transmembrane region" description="Helical" evidence="2">
    <location>
        <begin position="103"/>
        <end position="123"/>
    </location>
</feature>
<feature type="transmembrane region" description="Helical" evidence="2">
    <location>
        <begin position="140"/>
        <end position="160"/>
    </location>
</feature>
<feature type="transmembrane region" description="Helical" evidence="2">
    <location>
        <begin position="187"/>
        <end position="207"/>
    </location>
</feature>
<feature type="transmembrane region" description="Helical" evidence="2">
    <location>
        <begin position="228"/>
        <end position="248"/>
    </location>
</feature>
<feature type="transmembrane region" description="Helical" evidence="2">
    <location>
        <begin position="273"/>
        <end position="293"/>
    </location>
</feature>
<feature type="transmembrane region" description="Helical" evidence="2">
    <location>
        <begin position="311"/>
        <end position="331"/>
    </location>
</feature>
<feature type="transmembrane region" description="Helical" evidence="2">
    <location>
        <begin position="336"/>
        <end position="356"/>
    </location>
</feature>
<feature type="transmembrane region" description="Helical" evidence="2">
    <location>
        <begin position="376"/>
        <end position="396"/>
    </location>
</feature>
<feature type="transmembrane region" description="Helical" evidence="2">
    <location>
        <begin position="415"/>
        <end position="435"/>
    </location>
</feature>
<feature type="transmembrane region" description="Helical" evidence="2">
    <location>
        <begin position="451"/>
        <end position="471"/>
    </location>
</feature>
<feature type="transmembrane region" description="Helical" evidence="2">
    <location>
        <begin position="493"/>
        <end position="513"/>
    </location>
</feature>
<feature type="transmembrane region" description="Helical" evidence="2">
    <location>
        <begin position="587"/>
        <end position="604"/>
    </location>
</feature>
<feature type="transmembrane region" description="Helical" evidence="2">
    <location>
        <begin position="608"/>
        <end position="627"/>
    </location>
</feature>
<feature type="binding site" description="axial binding residue" evidence="1">
    <location>
        <position position="102"/>
    </location>
    <ligand>
        <name>Fe(II)-heme a</name>
        <dbReference type="ChEBI" id="CHEBI:61715"/>
    </ligand>
    <ligandPart>
        <name>Fe</name>
        <dbReference type="ChEBI" id="CHEBI:18248"/>
    </ligandPart>
</feature>
<feature type="binding site" evidence="1">
    <location>
        <position position="279"/>
    </location>
    <ligand>
        <name>Cu cation</name>
        <dbReference type="ChEBI" id="CHEBI:23378"/>
        <label>B</label>
    </ligand>
</feature>
<feature type="binding site" evidence="1">
    <location>
        <position position="283"/>
    </location>
    <ligand>
        <name>Cu cation</name>
        <dbReference type="ChEBI" id="CHEBI:23378"/>
        <label>B</label>
    </ligand>
</feature>
<feature type="binding site" evidence="1">
    <location>
        <position position="328"/>
    </location>
    <ligand>
        <name>Cu cation</name>
        <dbReference type="ChEBI" id="CHEBI:23378"/>
        <label>B</label>
    </ligand>
</feature>
<feature type="binding site" evidence="1">
    <location>
        <position position="329"/>
    </location>
    <ligand>
        <name>Cu cation</name>
        <dbReference type="ChEBI" id="CHEBI:23378"/>
        <label>B</label>
    </ligand>
</feature>
<feature type="binding site" description="axial binding residue" evidence="1">
    <location>
        <position position="414"/>
    </location>
    <ligand>
        <name>heme a3</name>
        <dbReference type="ChEBI" id="CHEBI:83282"/>
    </ligand>
    <ligandPart>
        <name>Fe</name>
        <dbReference type="ChEBI" id="CHEBI:18248"/>
    </ligandPart>
</feature>
<feature type="binding site" description="axial binding residue" evidence="1">
    <location>
        <position position="416"/>
    </location>
    <ligand>
        <name>Fe(II)-heme a</name>
        <dbReference type="ChEBI" id="CHEBI:61715"/>
    </ligand>
    <ligandPart>
        <name>Fe</name>
        <dbReference type="ChEBI" id="CHEBI:18248"/>
    </ligandPart>
</feature>
<feature type="cross-link" description="1'-histidyl-3'-tyrosine (His-Tyr)" evidence="1">
    <location>
        <begin position="279"/>
        <end position="283"/>
    </location>
</feature>
<reference key="1">
    <citation type="book" date="2006" name="Gram positive pathogens, 2nd edition">
        <title>The Staphylococcus aureus NCTC 8325 genome.</title>
        <editorList>
            <person name="Fischetti V."/>
            <person name="Novick R."/>
            <person name="Ferretti J."/>
            <person name="Portnoy D."/>
            <person name="Rood J."/>
        </editorList>
        <authorList>
            <person name="Gillaspy A.F."/>
            <person name="Worrell V."/>
            <person name="Orvis J."/>
            <person name="Roe B.A."/>
            <person name="Dyer D.W."/>
            <person name="Iandolo J.J."/>
        </authorList>
    </citation>
    <scope>NUCLEOTIDE SEQUENCE [LARGE SCALE GENOMIC DNA]</scope>
    <source>
        <strain>NCTC 8325 / PS 47</strain>
    </source>
</reference>
<keyword id="KW-1003">Cell membrane</keyword>
<keyword id="KW-0186">Copper</keyword>
<keyword id="KW-0249">Electron transport</keyword>
<keyword id="KW-0349">Heme</keyword>
<keyword id="KW-0375">Hydrogen ion transport</keyword>
<keyword id="KW-0406">Ion transport</keyword>
<keyword id="KW-0408">Iron</keyword>
<keyword id="KW-0472">Membrane</keyword>
<keyword id="KW-0479">Metal-binding</keyword>
<keyword id="KW-0560">Oxidoreductase</keyword>
<keyword id="KW-1185">Reference proteome</keyword>
<keyword id="KW-0679">Respiratory chain</keyword>
<keyword id="KW-0812">Transmembrane</keyword>
<keyword id="KW-1133">Transmembrane helix</keyword>
<keyword id="KW-0813">Transport</keyword>
<name>QOX1_STAA8</name>
<dbReference type="EC" id="1.10.3.-"/>
<dbReference type="EMBL" id="CP000253">
    <property type="protein sequence ID" value="ABD30125.1"/>
    <property type="molecule type" value="Genomic_DNA"/>
</dbReference>
<dbReference type="RefSeq" id="WP_001010762.1">
    <property type="nucleotide sequence ID" value="NZ_LS483365.1"/>
</dbReference>
<dbReference type="RefSeq" id="YP_499553.1">
    <property type="nucleotide sequence ID" value="NC_007795.1"/>
</dbReference>
<dbReference type="SMR" id="Q2FZK0"/>
<dbReference type="STRING" id="93061.SAOUHSC_01001"/>
<dbReference type="PaxDb" id="1280-SAXN108_1057"/>
<dbReference type="GeneID" id="3920401"/>
<dbReference type="KEGG" id="sao:SAOUHSC_01001"/>
<dbReference type="PATRIC" id="fig|93061.5.peg.919"/>
<dbReference type="eggNOG" id="COG0843">
    <property type="taxonomic scope" value="Bacteria"/>
</dbReference>
<dbReference type="HOGENOM" id="CLU_011899_7_1_9"/>
<dbReference type="OrthoDB" id="9759913at2"/>
<dbReference type="UniPathway" id="UPA00705"/>
<dbReference type="PRO" id="PR:Q2FZK0"/>
<dbReference type="Proteomes" id="UP000008816">
    <property type="component" value="Chromosome"/>
</dbReference>
<dbReference type="GO" id="GO:0005886">
    <property type="term" value="C:plasma membrane"/>
    <property type="evidence" value="ECO:0007669"/>
    <property type="project" value="UniProtKB-SubCell"/>
</dbReference>
<dbReference type="GO" id="GO:0005507">
    <property type="term" value="F:copper ion binding"/>
    <property type="evidence" value="ECO:0007669"/>
    <property type="project" value="InterPro"/>
</dbReference>
<dbReference type="GO" id="GO:0004129">
    <property type="term" value="F:cytochrome-c oxidase activity"/>
    <property type="evidence" value="ECO:0007669"/>
    <property type="project" value="InterPro"/>
</dbReference>
<dbReference type="GO" id="GO:0020037">
    <property type="term" value="F:heme binding"/>
    <property type="evidence" value="ECO:0007669"/>
    <property type="project" value="InterPro"/>
</dbReference>
<dbReference type="GO" id="GO:0016682">
    <property type="term" value="F:oxidoreductase activity, acting on diphenols and related substances as donors, oxygen as acceptor"/>
    <property type="evidence" value="ECO:0007669"/>
    <property type="project" value="InterPro"/>
</dbReference>
<dbReference type="GO" id="GO:0009060">
    <property type="term" value="P:aerobic respiration"/>
    <property type="evidence" value="ECO:0000318"/>
    <property type="project" value="GO_Central"/>
</dbReference>
<dbReference type="GO" id="GO:0015990">
    <property type="term" value="P:electron transport coupled proton transport"/>
    <property type="evidence" value="ECO:0000318"/>
    <property type="project" value="GO_Central"/>
</dbReference>
<dbReference type="GO" id="GO:0006119">
    <property type="term" value="P:oxidative phosphorylation"/>
    <property type="evidence" value="ECO:0007669"/>
    <property type="project" value="UniProtKB-UniPathway"/>
</dbReference>
<dbReference type="GO" id="GO:0022904">
    <property type="term" value="P:respiratory electron transport chain"/>
    <property type="evidence" value="ECO:0000318"/>
    <property type="project" value="GO_Central"/>
</dbReference>
<dbReference type="CDD" id="cd01662">
    <property type="entry name" value="Ubiquinol_Oxidase_I"/>
    <property type="match status" value="1"/>
</dbReference>
<dbReference type="FunFam" id="1.20.210.10:FF:000002">
    <property type="entry name" value="Cytochrome o ubiquinol oxidase, subunit I"/>
    <property type="match status" value="1"/>
</dbReference>
<dbReference type="Gene3D" id="1.20.210.10">
    <property type="entry name" value="Cytochrome c oxidase-like, subunit I domain"/>
    <property type="match status" value="1"/>
</dbReference>
<dbReference type="InterPro" id="IPR023616">
    <property type="entry name" value="Cyt_c_oxase-like_su1_dom"/>
</dbReference>
<dbReference type="InterPro" id="IPR036927">
    <property type="entry name" value="Cyt_c_oxase-like_su1_sf"/>
</dbReference>
<dbReference type="InterPro" id="IPR000883">
    <property type="entry name" value="Cyt_C_Oxase_1"/>
</dbReference>
<dbReference type="InterPro" id="IPR023615">
    <property type="entry name" value="Cyt_c_Oxase_su1_BS"/>
</dbReference>
<dbReference type="InterPro" id="IPR014233">
    <property type="entry name" value="QoxB"/>
</dbReference>
<dbReference type="NCBIfam" id="TIGR02882">
    <property type="entry name" value="QoxB"/>
    <property type="match status" value="1"/>
</dbReference>
<dbReference type="PANTHER" id="PTHR10422:SF35">
    <property type="entry name" value="CYTOCHROME BO(3) UBIQUINOL OXIDASE SUBUNIT 1"/>
    <property type="match status" value="1"/>
</dbReference>
<dbReference type="PANTHER" id="PTHR10422">
    <property type="entry name" value="CYTOCHROME C OXIDASE SUBUNIT 1"/>
    <property type="match status" value="1"/>
</dbReference>
<dbReference type="Pfam" id="PF00115">
    <property type="entry name" value="COX1"/>
    <property type="match status" value="1"/>
</dbReference>
<dbReference type="PRINTS" id="PR01165">
    <property type="entry name" value="CYCOXIDASEI"/>
</dbReference>
<dbReference type="SUPFAM" id="SSF81442">
    <property type="entry name" value="Cytochrome c oxidase subunit I-like"/>
    <property type="match status" value="1"/>
</dbReference>
<dbReference type="PROSITE" id="PS50855">
    <property type="entry name" value="COX1"/>
    <property type="match status" value="1"/>
</dbReference>
<dbReference type="PROSITE" id="PS00077">
    <property type="entry name" value="COX1_CUB"/>
    <property type="match status" value="1"/>
</dbReference>
<proteinExistence type="inferred from homology"/>